<keyword id="KW-1185">Reference proteome</keyword>
<keyword id="KW-0687">Ribonucleoprotein</keyword>
<keyword id="KW-0689">Ribosomal protein</keyword>
<reference key="1">
    <citation type="journal article" date="2000" name="Nature">
        <title>Sequence and analysis of chromosome 1 of the plant Arabidopsis thaliana.</title>
        <authorList>
            <person name="Theologis A."/>
            <person name="Ecker J.R."/>
            <person name="Palm C.J."/>
            <person name="Federspiel N.A."/>
            <person name="Kaul S."/>
            <person name="White O."/>
            <person name="Alonso J."/>
            <person name="Altafi H."/>
            <person name="Araujo R."/>
            <person name="Bowman C.L."/>
            <person name="Brooks S.Y."/>
            <person name="Buehler E."/>
            <person name="Chan A."/>
            <person name="Chao Q."/>
            <person name="Chen H."/>
            <person name="Cheuk R.F."/>
            <person name="Chin C.W."/>
            <person name="Chung M.K."/>
            <person name="Conn L."/>
            <person name="Conway A.B."/>
            <person name="Conway A.R."/>
            <person name="Creasy T.H."/>
            <person name="Dewar K."/>
            <person name="Dunn P."/>
            <person name="Etgu P."/>
            <person name="Feldblyum T.V."/>
            <person name="Feng J.-D."/>
            <person name="Fong B."/>
            <person name="Fujii C.Y."/>
            <person name="Gill J.E."/>
            <person name="Goldsmith A.D."/>
            <person name="Haas B."/>
            <person name="Hansen N.F."/>
            <person name="Hughes B."/>
            <person name="Huizar L."/>
            <person name="Hunter J.L."/>
            <person name="Jenkins J."/>
            <person name="Johnson-Hopson C."/>
            <person name="Khan S."/>
            <person name="Khaykin E."/>
            <person name="Kim C.J."/>
            <person name="Koo H.L."/>
            <person name="Kremenetskaia I."/>
            <person name="Kurtz D.B."/>
            <person name="Kwan A."/>
            <person name="Lam B."/>
            <person name="Langin-Hooper S."/>
            <person name="Lee A."/>
            <person name="Lee J.M."/>
            <person name="Lenz C.A."/>
            <person name="Li J.H."/>
            <person name="Li Y.-P."/>
            <person name="Lin X."/>
            <person name="Liu S.X."/>
            <person name="Liu Z.A."/>
            <person name="Luros J.S."/>
            <person name="Maiti R."/>
            <person name="Marziali A."/>
            <person name="Militscher J."/>
            <person name="Miranda M."/>
            <person name="Nguyen M."/>
            <person name="Nierman W.C."/>
            <person name="Osborne B.I."/>
            <person name="Pai G."/>
            <person name="Peterson J."/>
            <person name="Pham P.K."/>
            <person name="Rizzo M."/>
            <person name="Rooney T."/>
            <person name="Rowley D."/>
            <person name="Sakano H."/>
            <person name="Salzberg S.L."/>
            <person name="Schwartz J.R."/>
            <person name="Shinn P."/>
            <person name="Southwick A.M."/>
            <person name="Sun H."/>
            <person name="Tallon L.J."/>
            <person name="Tambunga G."/>
            <person name="Toriumi M.J."/>
            <person name="Town C.D."/>
            <person name="Utterback T."/>
            <person name="Van Aken S."/>
            <person name="Vaysberg M."/>
            <person name="Vysotskaia V.S."/>
            <person name="Walker M."/>
            <person name="Wu D."/>
            <person name="Yu G."/>
            <person name="Fraser C.M."/>
            <person name="Venter J.C."/>
            <person name="Davis R.W."/>
        </authorList>
    </citation>
    <scope>NUCLEOTIDE SEQUENCE [LARGE SCALE GENOMIC DNA]</scope>
    <source>
        <strain>cv. Columbia</strain>
    </source>
</reference>
<reference key="2">
    <citation type="journal article" date="2017" name="Plant J.">
        <title>Araport11: a complete reannotation of the Arabidopsis thaliana reference genome.</title>
        <authorList>
            <person name="Cheng C.Y."/>
            <person name="Krishnakumar V."/>
            <person name="Chan A.P."/>
            <person name="Thibaud-Nissen F."/>
            <person name="Schobel S."/>
            <person name="Town C.D."/>
        </authorList>
    </citation>
    <scope>GENOME REANNOTATION</scope>
    <source>
        <strain>cv. Columbia</strain>
    </source>
</reference>
<reference key="3">
    <citation type="journal article" date="2003" name="Science">
        <title>Empirical analysis of transcriptional activity in the Arabidopsis genome.</title>
        <authorList>
            <person name="Yamada K."/>
            <person name="Lim J."/>
            <person name="Dale J.M."/>
            <person name="Chen H."/>
            <person name="Shinn P."/>
            <person name="Palm C.J."/>
            <person name="Southwick A.M."/>
            <person name="Wu H.C."/>
            <person name="Kim C.J."/>
            <person name="Nguyen M."/>
            <person name="Pham P.K."/>
            <person name="Cheuk R.F."/>
            <person name="Karlin-Newmann G."/>
            <person name="Liu S.X."/>
            <person name="Lam B."/>
            <person name="Sakano H."/>
            <person name="Wu T."/>
            <person name="Yu G."/>
            <person name="Miranda M."/>
            <person name="Quach H.L."/>
            <person name="Tripp M."/>
            <person name="Chang C.H."/>
            <person name="Lee J.M."/>
            <person name="Toriumi M.J."/>
            <person name="Chan M.M."/>
            <person name="Tang C.C."/>
            <person name="Onodera C.S."/>
            <person name="Deng J.M."/>
            <person name="Akiyama K."/>
            <person name="Ansari Y."/>
            <person name="Arakawa T."/>
            <person name="Banh J."/>
            <person name="Banno F."/>
            <person name="Bowser L."/>
            <person name="Brooks S.Y."/>
            <person name="Carninci P."/>
            <person name="Chao Q."/>
            <person name="Choy N."/>
            <person name="Enju A."/>
            <person name="Goldsmith A.D."/>
            <person name="Gurjal M."/>
            <person name="Hansen N.F."/>
            <person name="Hayashizaki Y."/>
            <person name="Johnson-Hopson C."/>
            <person name="Hsuan V.W."/>
            <person name="Iida K."/>
            <person name="Karnes M."/>
            <person name="Khan S."/>
            <person name="Koesema E."/>
            <person name="Ishida J."/>
            <person name="Jiang P.X."/>
            <person name="Jones T."/>
            <person name="Kawai J."/>
            <person name="Kamiya A."/>
            <person name="Meyers C."/>
            <person name="Nakajima M."/>
            <person name="Narusaka M."/>
            <person name="Seki M."/>
            <person name="Sakurai T."/>
            <person name="Satou M."/>
            <person name="Tamse R."/>
            <person name="Vaysberg M."/>
            <person name="Wallender E.K."/>
            <person name="Wong C."/>
            <person name="Yamamura Y."/>
            <person name="Yuan S."/>
            <person name="Shinozaki K."/>
            <person name="Davis R.W."/>
            <person name="Theologis A."/>
            <person name="Ecker J.R."/>
        </authorList>
    </citation>
    <scope>NUCLEOTIDE SEQUENCE [LARGE SCALE MRNA]</scope>
    <source>
        <strain>cv. Columbia</strain>
    </source>
</reference>
<reference key="4">
    <citation type="journal article" date="2001" name="Plant Physiol.">
        <title>The organization of cytoplasmic ribosomal protein genes in the Arabidopsis genome.</title>
        <authorList>
            <person name="Barakat A."/>
            <person name="Szick-Miranda K."/>
            <person name="Chang I.-F."/>
            <person name="Guyot R."/>
            <person name="Blanc G."/>
            <person name="Cooke R."/>
            <person name="Delseny M."/>
            <person name="Bailey-Serres J."/>
        </authorList>
    </citation>
    <scope>GENE FAMILY ORGANIZATION</scope>
    <scope>NOMENCLATURE</scope>
</reference>
<reference key="5">
    <citation type="journal article" date="2023" name="Plant Cell">
        <title>An updated nomenclature for plant ribosomal protein genes.</title>
        <authorList>
            <person name="Scarpin M.R."/>
            <person name="Busche M."/>
            <person name="Martinez R.E."/>
            <person name="Harper L.C."/>
            <person name="Reiser L."/>
            <person name="Szakonyi D."/>
            <person name="Merchante C."/>
            <person name="Lan T."/>
            <person name="Xiong W."/>
            <person name="Mo B."/>
            <person name="Tang G."/>
            <person name="Chen X."/>
            <person name="Bailey-Serres J."/>
            <person name="Browning K.S."/>
            <person name="Brunkard J.O."/>
        </authorList>
    </citation>
    <scope>NOMENCLATURE</scope>
</reference>
<dbReference type="EMBL" id="AC026238">
    <property type="protein sequence ID" value="AAF98420.1"/>
    <property type="molecule type" value="Genomic_DNA"/>
</dbReference>
<dbReference type="EMBL" id="CP002684">
    <property type="protein sequence ID" value="AEE29727.1"/>
    <property type="molecule type" value="Genomic_DNA"/>
</dbReference>
<dbReference type="EMBL" id="AY054675">
    <property type="protein sequence ID" value="AAK96866.1"/>
    <property type="molecule type" value="mRNA"/>
</dbReference>
<dbReference type="EMBL" id="AY072496">
    <property type="protein sequence ID" value="AAL66911.1"/>
    <property type="molecule type" value="mRNA"/>
</dbReference>
<dbReference type="PIR" id="H86318">
    <property type="entry name" value="H86318"/>
</dbReference>
<dbReference type="RefSeq" id="NP_173289.1">
    <property type="nucleotide sequence ID" value="NM_101712.4"/>
</dbReference>
<dbReference type="SMR" id="Q9FZ76"/>
<dbReference type="BioGRID" id="23674">
    <property type="interactions" value="156"/>
</dbReference>
<dbReference type="FunCoup" id="Q9FZ76">
    <property type="interactions" value="3937"/>
</dbReference>
<dbReference type="IntAct" id="Q9FZ76">
    <property type="interactions" value="1"/>
</dbReference>
<dbReference type="STRING" id="3702.Q9FZ76"/>
<dbReference type="iPTMnet" id="Q9FZ76"/>
<dbReference type="PaxDb" id="3702-AT1G18540.1"/>
<dbReference type="ProteomicsDB" id="226821"/>
<dbReference type="EnsemblPlants" id="AT1G18540.1">
    <property type="protein sequence ID" value="AT1G18540.1"/>
    <property type="gene ID" value="AT1G18540"/>
</dbReference>
<dbReference type="GeneID" id="838435"/>
<dbReference type="Gramene" id="AT1G18540.1">
    <property type="protein sequence ID" value="AT1G18540.1"/>
    <property type="gene ID" value="AT1G18540"/>
</dbReference>
<dbReference type="KEGG" id="ath:AT1G18540"/>
<dbReference type="Araport" id="AT1G18540"/>
<dbReference type="TAIR" id="AT1G18540"/>
<dbReference type="eggNOG" id="KOG1694">
    <property type="taxonomic scope" value="Eukaryota"/>
</dbReference>
<dbReference type="HOGENOM" id="CLU_066767_1_0_1"/>
<dbReference type="InParanoid" id="Q9FZ76"/>
<dbReference type="OMA" id="GPYEVNG"/>
<dbReference type="PhylomeDB" id="Q9FZ76"/>
<dbReference type="CD-CODE" id="4299E36E">
    <property type="entry name" value="Nucleolus"/>
</dbReference>
<dbReference type="PRO" id="PR:Q9FZ76"/>
<dbReference type="Proteomes" id="UP000006548">
    <property type="component" value="Chromosome 1"/>
</dbReference>
<dbReference type="ExpressionAtlas" id="Q9FZ76">
    <property type="expression patterns" value="baseline and differential"/>
</dbReference>
<dbReference type="GO" id="GO:0022625">
    <property type="term" value="C:cytosolic large ribosomal subunit"/>
    <property type="evidence" value="ECO:0007005"/>
    <property type="project" value="TAIR"/>
</dbReference>
<dbReference type="GO" id="GO:0022626">
    <property type="term" value="C:cytosolic ribosome"/>
    <property type="evidence" value="ECO:0007005"/>
    <property type="project" value="TAIR"/>
</dbReference>
<dbReference type="GO" id="GO:0005783">
    <property type="term" value="C:endoplasmic reticulum"/>
    <property type="evidence" value="ECO:0007005"/>
    <property type="project" value="TAIR"/>
</dbReference>
<dbReference type="GO" id="GO:0005634">
    <property type="term" value="C:nucleus"/>
    <property type="evidence" value="ECO:0007005"/>
    <property type="project" value="TAIR"/>
</dbReference>
<dbReference type="GO" id="GO:0005886">
    <property type="term" value="C:plasma membrane"/>
    <property type="evidence" value="ECO:0007005"/>
    <property type="project" value="TAIR"/>
</dbReference>
<dbReference type="GO" id="GO:0009506">
    <property type="term" value="C:plasmodesma"/>
    <property type="evidence" value="ECO:0007005"/>
    <property type="project" value="TAIR"/>
</dbReference>
<dbReference type="GO" id="GO:0003729">
    <property type="term" value="F:mRNA binding"/>
    <property type="evidence" value="ECO:0000314"/>
    <property type="project" value="TAIR"/>
</dbReference>
<dbReference type="GO" id="GO:0003735">
    <property type="term" value="F:structural constituent of ribosome"/>
    <property type="evidence" value="ECO:0000314"/>
    <property type="project" value="CAFA"/>
</dbReference>
<dbReference type="GO" id="GO:0006412">
    <property type="term" value="P:translation"/>
    <property type="evidence" value="ECO:0007669"/>
    <property type="project" value="InterPro"/>
</dbReference>
<dbReference type="CDD" id="cd13156">
    <property type="entry name" value="KOW_RPL6"/>
    <property type="match status" value="1"/>
</dbReference>
<dbReference type="FunFam" id="2.30.30.30:FF:000014">
    <property type="entry name" value="60S ribosomal protein L6"/>
    <property type="match status" value="1"/>
</dbReference>
<dbReference type="Gene3D" id="2.30.30.30">
    <property type="match status" value="1"/>
</dbReference>
<dbReference type="InterPro" id="IPR000915">
    <property type="entry name" value="60S_ribosomal_eL6"/>
</dbReference>
<dbReference type="InterPro" id="IPR014722">
    <property type="entry name" value="Rib_uL2_dom2"/>
</dbReference>
<dbReference type="InterPro" id="IPR041997">
    <property type="entry name" value="Ribosomal_eL6_KOW"/>
</dbReference>
<dbReference type="InterPro" id="IPR005568">
    <property type="entry name" value="Ribosomal_uL6_N"/>
</dbReference>
<dbReference type="InterPro" id="IPR008991">
    <property type="entry name" value="Translation_prot_SH3-like_sf"/>
</dbReference>
<dbReference type="PANTHER" id="PTHR10715">
    <property type="entry name" value="60S RIBOSOMAL PROTEIN L6"/>
    <property type="match status" value="1"/>
</dbReference>
<dbReference type="PANTHER" id="PTHR10715:SF0">
    <property type="entry name" value="LARGE RIBOSOMAL SUBUNIT PROTEIN EL6"/>
    <property type="match status" value="1"/>
</dbReference>
<dbReference type="Pfam" id="PF01159">
    <property type="entry name" value="Ribosomal_L6e"/>
    <property type="match status" value="1"/>
</dbReference>
<dbReference type="Pfam" id="PF03868">
    <property type="entry name" value="Ribosomal_L6e_N"/>
    <property type="match status" value="1"/>
</dbReference>
<dbReference type="SUPFAM" id="SSF50104">
    <property type="entry name" value="Translation proteins SH3-like domain"/>
    <property type="match status" value="1"/>
</dbReference>
<proteinExistence type="evidence at transcript level"/>
<accession>Q9FZ76</accession>
<sequence>MPAAKRTPKVNRNPDLIRGVGKYSRSQMYHKRGLWAIKAKNGGVFPRHDAQPKVDAPVEKPAKFYPAEDVKKPLVNRRKPKPTKLKASITPGTVLIILAGRFKGKRVVFLKQLSSGLLLVTGPFKINGVPLRRVNQAYVIGTSTKIDISGVNTEKFDDKYFGKVAEKKKKKTEGEFFEAEKEEKKEIPQEKKEDQKTVDAALIKSIEAVPELKVYLGARFSLSQGMKPHELVF</sequence>
<gene>
    <name type="primary">RPL6A</name>
    <name type="ordered locus">At1g18540</name>
    <name type="ORF">F25I16.12</name>
</gene>
<evidence type="ECO:0000256" key="1">
    <source>
        <dbReference type="SAM" id="MobiDB-lite"/>
    </source>
</evidence>
<evidence type="ECO:0000303" key="2">
    <source>
    </source>
</evidence>
<evidence type="ECO:0000305" key="3"/>
<feature type="chain" id="PRO_0000239921" description="Large ribosomal subunit protein eL6z">
    <location>
        <begin position="1"/>
        <end position="233"/>
    </location>
</feature>
<feature type="region of interest" description="Disordered" evidence="1">
    <location>
        <begin position="175"/>
        <end position="195"/>
    </location>
</feature>
<organism>
    <name type="scientific">Arabidopsis thaliana</name>
    <name type="common">Mouse-ear cress</name>
    <dbReference type="NCBI Taxonomy" id="3702"/>
    <lineage>
        <taxon>Eukaryota</taxon>
        <taxon>Viridiplantae</taxon>
        <taxon>Streptophyta</taxon>
        <taxon>Embryophyta</taxon>
        <taxon>Tracheophyta</taxon>
        <taxon>Spermatophyta</taxon>
        <taxon>Magnoliopsida</taxon>
        <taxon>eudicotyledons</taxon>
        <taxon>Gunneridae</taxon>
        <taxon>Pentapetalae</taxon>
        <taxon>rosids</taxon>
        <taxon>malvids</taxon>
        <taxon>Brassicales</taxon>
        <taxon>Brassicaceae</taxon>
        <taxon>Camelineae</taxon>
        <taxon>Arabidopsis</taxon>
    </lineage>
</organism>
<protein>
    <recommendedName>
        <fullName evidence="2">Large ribosomal subunit protein eL6z</fullName>
    </recommendedName>
    <alternativeName>
        <fullName>60S ribosomal protein L6-1</fullName>
    </alternativeName>
</protein>
<name>RL61_ARATH</name>
<comment type="similarity">
    <text evidence="3">Belongs to the eukaryotic ribosomal protein eL6 family.</text>
</comment>